<comment type="function">
    <text evidence="1 2 3 4">Required for organization of the cellular microtubule array and microtubule anchoring at the centrosome. May regulate microtubule organization at least in part by targeting the microtubule severing protein KATNA1 to the centrosome. Also positively regulates the activity of the minus-end directed microtubule motor protein dynein. May enhance dynein-mediated microtubule sliding by targeting dynein to the microtubule plus ends. Required for several dynein- and microtubule-dependent processes such as the maintenance of Golgi integrity, the centripetal motion of secretory vesicles and the coupling of the nucleus and centrosome. Also required during brain development for the migration of newly formed neurons from the ventricular/subventricular zone toward the cortical plate. Plays a role, together with DISC1, in the regulation of neurite outgrowth. Required for mitosis in some cell types but appears to be dispensible for mitosis in cortical neuronal progenitors, which instead requires NDE1. Facilitates the polymerization of neurofilaments from the individual subunits NEFH and NEFL. Positively regulates lysosome peripheral distribution and ruffled border formation in osteoclasts (By similarity). Plays a role, together with DISC1, in the regulation of neurite outgrowth (By similarity). May act as a RAB9A/B effector that tethers RAB9-associated late endosomes to the dynein motor for their retrograde transport to the trans-Golgi network (By similarity).</text>
</comment>
<comment type="subunit">
    <text evidence="1 3 4">Self-associates. Interacts with DISC1, dynein, dynactin, tubulin gamma, KATNA1, KATNB1, microtubules, PAFAH1B1, PCM1, PCNT, and YWHAE. Interacts directly with NEFL and indirectly with NEFH. Interacts (via C-terminus) with CENPF. Interacts with ZNF365. Interacts with PLEKHM1 (via N- and C-terminus). Interacts with GTP-bound RAB9A; the interaction may lead to RAB9A-dynein motor tethering (By similarity).</text>
</comment>
<comment type="subcellular location">
    <subcellularLocation>
        <location evidence="1">Cytoplasm</location>
        <location evidence="1">Cytoskeleton</location>
    </subcellularLocation>
    <subcellularLocation>
        <location evidence="1">Cytoplasm</location>
        <location evidence="1">Cytoskeleton</location>
        <location evidence="1">Microtubule organizing center</location>
        <location evidence="1">Centrosome</location>
    </subcellularLocation>
    <subcellularLocation>
        <location evidence="1">Chromosome</location>
        <location evidence="1">Centromere</location>
        <location evidence="1">Kinetochore</location>
    </subcellularLocation>
    <subcellularLocation>
        <location evidence="1">Cytoplasm</location>
        <location evidence="1">Cytoskeleton</location>
        <location evidence="1">Spindle</location>
    </subcellularLocation>
    <text evidence="1">Localizes to the interphase centrosome and the mitotic spindle. Localizes to the cell body of the motor neurons and colocalizes with assembled neurofilaments within axonal processes. Localizes to the microtubules of the manchette in elongated spermatids. Colocalizes with DISC1 in the perinuclear region, including the centrosome. Localizes to the kinetochore in a CENPF-dependent manner (By similarity).</text>
</comment>
<comment type="PTM">
    <text evidence="1">Phosphorylated in mitosis. Can be phosphorylated by CDK1, CDK5 and MAPK1. Phosphorylation by CDK5 promotes interaction with KATNA1 and YWHAE (By similarity).</text>
</comment>
<comment type="PTM">
    <text evidence="1">Palmitoylation at Cys-273 reduces affinity for dynein.</text>
</comment>
<comment type="similarity">
    <text evidence="7">Belongs to the nudE family.</text>
</comment>
<evidence type="ECO:0000250" key="1"/>
<evidence type="ECO:0000250" key="2">
    <source>
        <dbReference type="UniProtKB" id="Q78PB6"/>
    </source>
</evidence>
<evidence type="ECO:0000250" key="3">
    <source>
        <dbReference type="UniProtKB" id="Q9ERR1"/>
    </source>
</evidence>
<evidence type="ECO:0000250" key="4">
    <source>
        <dbReference type="UniProtKB" id="Q9GZM8"/>
    </source>
</evidence>
<evidence type="ECO:0000255" key="5"/>
<evidence type="ECO:0000256" key="6">
    <source>
        <dbReference type="SAM" id="MobiDB-lite"/>
    </source>
</evidence>
<evidence type="ECO:0000305" key="7"/>
<organism>
    <name type="scientific">Pongo abelii</name>
    <name type="common">Sumatran orangutan</name>
    <name type="synonym">Pongo pygmaeus abelii</name>
    <dbReference type="NCBI Taxonomy" id="9601"/>
    <lineage>
        <taxon>Eukaryota</taxon>
        <taxon>Metazoa</taxon>
        <taxon>Chordata</taxon>
        <taxon>Craniata</taxon>
        <taxon>Vertebrata</taxon>
        <taxon>Euteleostomi</taxon>
        <taxon>Mammalia</taxon>
        <taxon>Eutheria</taxon>
        <taxon>Euarchontoglires</taxon>
        <taxon>Primates</taxon>
        <taxon>Haplorrhini</taxon>
        <taxon>Catarrhini</taxon>
        <taxon>Hominidae</taxon>
        <taxon>Pongo</taxon>
    </lineage>
</organism>
<protein>
    <recommendedName>
        <fullName>Nuclear distribution protein nudE-like 1</fullName>
        <shortName>Protein Nudel</shortName>
    </recommendedName>
</protein>
<dbReference type="EMBL" id="CR859662">
    <property type="protein sequence ID" value="CAH91823.1"/>
    <property type="molecule type" value="mRNA"/>
</dbReference>
<dbReference type="EMBL" id="CR861017">
    <property type="protein sequence ID" value="CAH93111.1"/>
    <property type="molecule type" value="mRNA"/>
</dbReference>
<dbReference type="RefSeq" id="NP_001126055.1">
    <property type="nucleotide sequence ID" value="NM_001132583.1"/>
</dbReference>
<dbReference type="SMR" id="Q5R8T7"/>
<dbReference type="FunCoup" id="Q5R8T7">
    <property type="interactions" value="1367"/>
</dbReference>
<dbReference type="STRING" id="9601.ENSPPYP00000008952"/>
<dbReference type="Ensembl" id="ENSPPYT00000009318.2">
    <property type="protein sequence ID" value="ENSPPYP00000008952.1"/>
    <property type="gene ID" value="ENSPPYG00000007962.3"/>
</dbReference>
<dbReference type="GeneID" id="100173007"/>
<dbReference type="KEGG" id="pon:100173007"/>
<dbReference type="CTD" id="81565"/>
<dbReference type="eggNOG" id="KOG1853">
    <property type="taxonomic scope" value="Eukaryota"/>
</dbReference>
<dbReference type="GeneTree" id="ENSGT00390000000111"/>
<dbReference type="HOGENOM" id="CLU_057872_1_0_1"/>
<dbReference type="InParanoid" id="Q5R8T7"/>
<dbReference type="OrthoDB" id="5877028at2759"/>
<dbReference type="TreeFam" id="TF325693"/>
<dbReference type="Proteomes" id="UP000001595">
    <property type="component" value="Chromosome 17"/>
</dbReference>
<dbReference type="GO" id="GO:0005813">
    <property type="term" value="C:centrosome"/>
    <property type="evidence" value="ECO:0007669"/>
    <property type="project" value="UniProtKB-SubCell"/>
</dbReference>
<dbReference type="GO" id="GO:0005737">
    <property type="term" value="C:cytoplasm"/>
    <property type="evidence" value="ECO:0007669"/>
    <property type="project" value="UniProtKB-KW"/>
</dbReference>
<dbReference type="GO" id="GO:0005871">
    <property type="term" value="C:kinesin complex"/>
    <property type="evidence" value="ECO:0007669"/>
    <property type="project" value="TreeGrafter"/>
</dbReference>
<dbReference type="GO" id="GO:0000776">
    <property type="term" value="C:kinetochore"/>
    <property type="evidence" value="ECO:0007669"/>
    <property type="project" value="UniProtKB-KW"/>
</dbReference>
<dbReference type="GO" id="GO:0005874">
    <property type="term" value="C:microtubule"/>
    <property type="evidence" value="ECO:0007669"/>
    <property type="project" value="UniProtKB-KW"/>
</dbReference>
<dbReference type="GO" id="GO:0005819">
    <property type="term" value="C:spindle"/>
    <property type="evidence" value="ECO:0007669"/>
    <property type="project" value="UniProtKB-SubCell"/>
</dbReference>
<dbReference type="GO" id="GO:0008017">
    <property type="term" value="F:microtubule binding"/>
    <property type="evidence" value="ECO:0007669"/>
    <property type="project" value="InterPro"/>
</dbReference>
<dbReference type="GO" id="GO:0030154">
    <property type="term" value="P:cell differentiation"/>
    <property type="evidence" value="ECO:0007669"/>
    <property type="project" value="UniProtKB-KW"/>
</dbReference>
<dbReference type="GO" id="GO:0016477">
    <property type="term" value="P:cell migration"/>
    <property type="evidence" value="ECO:0007669"/>
    <property type="project" value="TreeGrafter"/>
</dbReference>
<dbReference type="GO" id="GO:0051642">
    <property type="term" value="P:centrosome localization"/>
    <property type="evidence" value="ECO:0007669"/>
    <property type="project" value="TreeGrafter"/>
</dbReference>
<dbReference type="GO" id="GO:0007059">
    <property type="term" value="P:chromosome segregation"/>
    <property type="evidence" value="ECO:0007669"/>
    <property type="project" value="TreeGrafter"/>
</dbReference>
<dbReference type="GO" id="GO:0051303">
    <property type="term" value="P:establishment of chromosome localization"/>
    <property type="evidence" value="ECO:0007669"/>
    <property type="project" value="TreeGrafter"/>
</dbReference>
<dbReference type="GO" id="GO:0000132">
    <property type="term" value="P:establishment of mitotic spindle orientation"/>
    <property type="evidence" value="ECO:0007669"/>
    <property type="project" value="TreeGrafter"/>
</dbReference>
<dbReference type="GO" id="GO:0032418">
    <property type="term" value="P:lysosome localization"/>
    <property type="evidence" value="ECO:0000250"/>
    <property type="project" value="UniProtKB"/>
</dbReference>
<dbReference type="GO" id="GO:0007020">
    <property type="term" value="P:microtubule nucleation"/>
    <property type="evidence" value="ECO:0007669"/>
    <property type="project" value="TreeGrafter"/>
</dbReference>
<dbReference type="GO" id="GO:0007100">
    <property type="term" value="P:mitotic centrosome separation"/>
    <property type="evidence" value="ECO:0007669"/>
    <property type="project" value="TreeGrafter"/>
</dbReference>
<dbReference type="GO" id="GO:0007399">
    <property type="term" value="P:nervous system development"/>
    <property type="evidence" value="ECO:0007669"/>
    <property type="project" value="UniProtKB-KW"/>
</dbReference>
<dbReference type="GO" id="GO:1900029">
    <property type="term" value="P:positive regulation of ruffle assembly"/>
    <property type="evidence" value="ECO:0000250"/>
    <property type="project" value="UniProtKB"/>
</dbReference>
<dbReference type="GO" id="GO:0010975">
    <property type="term" value="P:regulation of neuron projection development"/>
    <property type="evidence" value="ECO:0007669"/>
    <property type="project" value="TreeGrafter"/>
</dbReference>
<dbReference type="GO" id="GO:0047496">
    <property type="term" value="P:vesicle transport along microtubule"/>
    <property type="evidence" value="ECO:0007669"/>
    <property type="project" value="TreeGrafter"/>
</dbReference>
<dbReference type="Gene3D" id="6.10.250.1080">
    <property type="match status" value="1"/>
</dbReference>
<dbReference type="InterPro" id="IPR033494">
    <property type="entry name" value="NUDE"/>
</dbReference>
<dbReference type="InterPro" id="IPR006964">
    <property type="entry name" value="NUDE_dom"/>
</dbReference>
<dbReference type="PANTHER" id="PTHR10921">
    <property type="entry name" value="NUCLEAR DISTRIBUTION PROTEIN NUDE HOMOLOG 1"/>
    <property type="match status" value="1"/>
</dbReference>
<dbReference type="PANTHER" id="PTHR10921:SF0">
    <property type="entry name" value="NUCLEAR DISTRIBUTION PROTEIN NUDE-LIKE 1"/>
    <property type="match status" value="1"/>
</dbReference>
<dbReference type="Pfam" id="PF04880">
    <property type="entry name" value="NUDE_C"/>
    <property type="match status" value="1"/>
</dbReference>
<sequence>MDSEDIPDFSSLKEETAYWKELSLKYKQSFQEARDELVEFQEGSRELEAELEAQLVQAEQRNRDLQADNQRLKYEVEALKEKLEHQYAQSYKQVSVLEDDLSQTRAIKEQLHKYVRELEQANDDLERAKRATIVSLEDFEQRLNQAIERNAFLESELDEKESLLVSVQRLKDEARDLRQELAVRERQQEVTRKSAPSSPTLDCEKMDSAVQASLSLPATPVGKGTENTFPSPKAIPNGFGTSPLTPSARISALNIVGDLLRKVGALESKLAACRNFAKDQASRKSYISGNVNCGVLNGNGTKFSRSGHTSFFDKGAVNGFDPAPPPPGLGSSRPSSAPGMLPLSV</sequence>
<gene>
    <name type="primary">NDEL1</name>
    <name type="synonym">NUDEL</name>
</gene>
<feature type="chain" id="PRO_0000240213" description="Nuclear distribution protein nudE-like 1">
    <location>
        <begin position="1"/>
        <end position="345"/>
    </location>
</feature>
<feature type="region of interest" description="Self-association" evidence="1">
    <location>
        <begin position="56"/>
        <end position="166"/>
    </location>
</feature>
<feature type="region of interest" description="Interaction with KATNB1" evidence="1">
    <location>
        <begin position="64"/>
        <end position="189"/>
    </location>
</feature>
<feature type="region of interest" description="Required for interaction with PAFAH1B1" evidence="1">
    <location>
        <begin position="114"/>
        <end position="133"/>
    </location>
</feature>
<feature type="region of interest" description="Interaction with CENPF" evidence="1">
    <location>
        <begin position="175"/>
        <end position="345"/>
    </location>
</feature>
<feature type="region of interest" description="Interaction with YWHAE" evidence="1">
    <location>
        <begin position="189"/>
        <end position="256"/>
    </location>
</feature>
<feature type="region of interest" description="Interaction with NEFL" evidence="1">
    <location>
        <begin position="191"/>
        <end position="345"/>
    </location>
</feature>
<feature type="region of interest" description="Interaction with KATNA1" evidence="1">
    <location>
        <begin position="195"/>
        <end position="256"/>
    </location>
</feature>
<feature type="region of interest" description="Interaction with DISC1" evidence="1">
    <location>
        <begin position="241"/>
        <end position="280"/>
    </location>
</feature>
<feature type="region of interest" description="Required for localization to the centrosome and interaction with dynein, dynactin, tubulin gamma, PCM1 and PCNT" evidence="1">
    <location>
        <begin position="256"/>
        <end position="291"/>
    </location>
</feature>
<feature type="region of interest" description="Disordered" evidence="6">
    <location>
        <begin position="315"/>
        <end position="345"/>
    </location>
</feature>
<feature type="coiled-coil region" evidence="5">
    <location>
        <begin position="28"/>
        <end position="190"/>
    </location>
</feature>
<feature type="compositionally biased region" description="Low complexity" evidence="6">
    <location>
        <begin position="329"/>
        <end position="339"/>
    </location>
</feature>
<feature type="modified residue" description="Phosphoserine" evidence="4">
    <location>
        <position position="215"/>
    </location>
</feature>
<feature type="modified residue" description="Phosphothreonine; by CDK1 and MAPK1" evidence="4">
    <location>
        <position position="219"/>
    </location>
</feature>
<feature type="modified residue" description="Phosphoserine" evidence="4">
    <location>
        <position position="231"/>
    </location>
</feature>
<feature type="modified residue" description="Phosphoserine; by CDK1" evidence="4">
    <location>
        <position position="242"/>
    </location>
</feature>
<feature type="modified residue" description="Phosphothreonine; by CDK1 and MAPK1" evidence="4">
    <location>
        <position position="245"/>
    </location>
</feature>
<feature type="modified residue" description="Phosphoserine" evidence="2">
    <location>
        <position position="344"/>
    </location>
</feature>
<feature type="lipid moiety-binding region" description="S-palmitoyl cysteine; by ZDHHC2, ZDHHC3 and ZDHHC7" evidence="1">
    <location>
        <position position="273"/>
    </location>
</feature>
<feature type="sequence conflict" description="In Ref. 1; CAH93111." evidence="7" ref="1">
    <original>F</original>
    <variation>L</variation>
    <location>
        <position position="239"/>
    </location>
</feature>
<reference key="1">
    <citation type="submission" date="2004-11" db="EMBL/GenBank/DDBJ databases">
        <authorList>
            <consortium name="The German cDNA consortium"/>
        </authorList>
    </citation>
    <scope>NUCLEOTIDE SEQUENCE [LARGE SCALE MRNA]</scope>
    <source>
        <tissue>Brain cortex</tissue>
    </source>
</reference>
<keyword id="KW-0137">Centromere</keyword>
<keyword id="KW-0158">Chromosome</keyword>
<keyword id="KW-0175">Coiled coil</keyword>
<keyword id="KW-0963">Cytoplasm</keyword>
<keyword id="KW-0206">Cytoskeleton</keyword>
<keyword id="KW-0217">Developmental protein</keyword>
<keyword id="KW-0221">Differentiation</keyword>
<keyword id="KW-0995">Kinetochore</keyword>
<keyword id="KW-0449">Lipoprotein</keyword>
<keyword id="KW-0493">Microtubule</keyword>
<keyword id="KW-0524">Neurogenesis</keyword>
<keyword id="KW-0564">Palmitate</keyword>
<keyword id="KW-0597">Phosphoprotein</keyword>
<keyword id="KW-1185">Reference proteome</keyword>
<keyword id="KW-0813">Transport</keyword>
<name>NDEL1_PONAB</name>
<accession>Q5R8T7</accession>
<accession>Q5R555</accession>
<proteinExistence type="evidence at transcript level"/>